<protein>
    <recommendedName>
        <fullName evidence="3">Omega-conotoxin MoVIA</fullName>
    </recommendedName>
    <component>
        <recommendedName>
            <fullName evidence="3">Omega-conotoxin MoVIB</fullName>
        </recommendedName>
    </component>
</protein>
<evidence type="ECO:0000255" key="1"/>
<evidence type="ECO:0000269" key="2">
    <source>
    </source>
</evidence>
<evidence type="ECO:0000303" key="3">
    <source>
    </source>
</evidence>
<evidence type="ECO:0000305" key="4"/>
<evidence type="ECO:0000305" key="5">
    <source>
    </source>
</evidence>
<evidence type="ECO:0000312" key="6">
    <source>
        <dbReference type="PDB" id="6CEG"/>
    </source>
</evidence>
<evidence type="ECO:0007829" key="7">
    <source>
        <dbReference type="PDB" id="6CEG"/>
    </source>
</evidence>
<dbReference type="PDB" id="6CEG">
    <property type="method" value="NMR"/>
    <property type="chains" value="A=46-75"/>
</dbReference>
<dbReference type="PDBsum" id="6CEG"/>
<dbReference type="SMR" id="A0A384E129"/>
<dbReference type="GO" id="GO:0005576">
    <property type="term" value="C:extracellular region"/>
    <property type="evidence" value="ECO:0007669"/>
    <property type="project" value="UniProtKB-SubCell"/>
</dbReference>
<dbReference type="GO" id="GO:0005246">
    <property type="term" value="F:calcium channel regulator activity"/>
    <property type="evidence" value="ECO:0007669"/>
    <property type="project" value="UniProtKB-KW"/>
</dbReference>
<dbReference type="GO" id="GO:0008200">
    <property type="term" value="F:ion channel inhibitor activity"/>
    <property type="evidence" value="ECO:0007669"/>
    <property type="project" value="InterPro"/>
</dbReference>
<dbReference type="GO" id="GO:0090729">
    <property type="term" value="F:toxin activity"/>
    <property type="evidence" value="ECO:0007669"/>
    <property type="project" value="UniProtKB-KW"/>
</dbReference>
<dbReference type="InterPro" id="IPR004214">
    <property type="entry name" value="Conotoxin"/>
</dbReference>
<dbReference type="InterPro" id="IPR012321">
    <property type="entry name" value="Conotoxin_omega-typ_CS"/>
</dbReference>
<dbReference type="Pfam" id="PF02950">
    <property type="entry name" value="Conotoxin"/>
    <property type="match status" value="1"/>
</dbReference>
<dbReference type="SUPFAM" id="SSF57059">
    <property type="entry name" value="omega toxin-like"/>
    <property type="match status" value="1"/>
</dbReference>
<dbReference type="PROSITE" id="PS60004">
    <property type="entry name" value="OMEGA_CONOTOXIN"/>
    <property type="match status" value="1"/>
</dbReference>
<reference key="1">
    <citation type="journal article" date="2018" name="Sci. Rep.">
        <title>Novel analgesic omega-conotoxins from the vermivorous cone snail Conus moncuri provide new insights into the evolution of conopeptides.</title>
        <authorList>
            <person name="Sousa S.R."/>
            <person name="McArthur J.R."/>
            <person name="Brust A."/>
            <person name="Bhola R.F."/>
            <person name="Rosengren K.J."/>
            <person name="Ragnarsson L."/>
            <person name="Dutertre S."/>
            <person name="Alewood P.F."/>
            <person name="Christie M.J."/>
            <person name="Adams D.J."/>
            <person name="Vetter I."/>
            <person name="Lewis R.J."/>
        </authorList>
    </citation>
    <scope>NUCLEOTIDE SEQUENCE [MRNA]</scope>
    <scope>PROTEIN SEQUENCE OF 46-75 AND 46-76</scope>
    <scope>FUNCTION</scope>
    <scope>STRUCTURE BY NMR OF 46-75 (MOVIB)</scope>
    <scope>HYDROXYLATION AT PRO-49 AND PRO-55</scope>
    <scope>DISULFIDE BOND</scope>
    <scope>SUBCELLULAR LOCATION</scope>
    <scope>SYNTHESIS OF 46-75 AND 46-76</scope>
    <scope>MUTAGENESIS OF ARG-58</scope>
    <source>
        <tissue>Venom</tissue>
        <tissue>Venom duct</tissue>
    </source>
</reference>
<proteinExistence type="evidence at protein level"/>
<comment type="function">
    <molecule>Omega-conotoxin MoVIA</molecule>
    <text evidence="2">Omega-conotoxins act at presynaptic membranes, they bind and block voltage-gated calcium channels (Cav). This toxin potently blocks mammalian N-type calcium channels (Cav2.2/CACNA1B) (IC(50)=330 nM on human channels). It is 9-fold more potent in displacing radiolabeled omega-conotoxin GVIA from fish brain membranes than from human SH-SY5Y cells.</text>
</comment>
<comment type="function">
    <molecule>Omega-conotoxin MoVIB</molecule>
    <text evidence="2">Omega-conotoxins act at presynaptic membranes, they bind and block voltage-gated calcium channels (Cav). This toxin potently blocks mammalian N-type calcium channels (Cav2.2/CACNA1B) (IC(50)=600 nM on human channels). It is 60-fold more potent in displacing radiolabeled omega-conotoxin GVIA from fish brain membranes than from human SH-SY5Y cells. In vivo, when tested on rat neuropathic pain model, this toxin shows an analgesic activity (PubMed:30194442).</text>
</comment>
<comment type="subcellular location">
    <subcellularLocation>
        <location evidence="2">Secreted</location>
    </subcellularLocation>
</comment>
<comment type="tissue specificity">
    <text evidence="5">Expressed by the venom duct.</text>
</comment>
<comment type="domain">
    <text evidence="2">The presence of a 'disulfide through disulfide knot' structurally defines this protein as a knottin.</text>
</comment>
<comment type="domain">
    <text evidence="4">The cysteine framework is VI/VII (C-C-CC-C-C).</text>
</comment>
<comment type="miscellaneous">
    <text evidence="5">C.moncuri is a vermivorous cone snail. Both MoVIA and MoVIB have an Arg-58 (Arg-13 in mature peptides) that replaces the functionally critical Tyr-13 found in potent Cav2.2/CACNA1B inhibitors from fish-hunting species (such as MVIIA (AC P05484) and GVIA (AC P01522)).</text>
</comment>
<comment type="similarity">
    <text evidence="4">Belongs to the conotoxin O1 superfamily.</text>
</comment>
<comment type="online information" name="Biological Magnetic Resonance Data Bank">
    <link uri="https://bmrb.io/data_library/summary/index.php?bmrbId=30405"/>
</comment>
<feature type="signal peptide" evidence="1">
    <location>
        <begin position="1"/>
        <end position="22"/>
    </location>
</feature>
<feature type="propeptide" id="PRO_0000446312" evidence="4">
    <location>
        <begin position="23"/>
        <end position="45"/>
    </location>
</feature>
<feature type="peptide" id="PRO_0000446313" description="Omega-conotoxin MoVIA" evidence="2">
    <location>
        <begin position="46"/>
        <end position="76"/>
    </location>
</feature>
<feature type="peptide" id="PRO_0000446314" description="Omega-conotoxin MoVIB" evidence="2">
    <location>
        <begin position="46"/>
        <end position="75"/>
    </location>
</feature>
<feature type="modified residue" description="Hydroxyproline" evidence="2">
    <location>
        <position position="49"/>
    </location>
</feature>
<feature type="modified residue" description="Hydroxyproline" evidence="2">
    <location>
        <position position="55"/>
    </location>
</feature>
<feature type="disulfide bond" evidence="2 6">
    <location>
        <begin position="46"/>
        <end position="61"/>
    </location>
</feature>
<feature type="disulfide bond" evidence="2 6">
    <location>
        <begin position="53"/>
        <end position="64"/>
    </location>
</feature>
<feature type="disulfide bond" evidence="2 6">
    <location>
        <begin position="60"/>
        <end position="71"/>
    </location>
</feature>
<feature type="mutagenesis site" description="MoVIB-[R13Y]; 10.5-fold decrease in inhibition potency of human Cav2.2/CACNA1B." evidence="2">
    <original>R</original>
    <variation>Y</variation>
    <location>
        <position position="58"/>
    </location>
</feature>
<feature type="turn" evidence="7">
    <location>
        <begin position="55"/>
        <end position="57"/>
    </location>
</feature>
<feature type="strand" evidence="7">
    <location>
        <begin position="60"/>
        <end position="62"/>
    </location>
</feature>
<feature type="turn" evidence="7">
    <location>
        <begin position="66"/>
        <end position="69"/>
    </location>
</feature>
<organism>
    <name type="scientific">Conus moncuri</name>
    <name type="common">Sea snail</name>
    <dbReference type="NCBI Taxonomy" id="2496636"/>
    <lineage>
        <taxon>Eukaryota</taxon>
        <taxon>Metazoa</taxon>
        <taxon>Spiralia</taxon>
        <taxon>Lophotrochozoa</taxon>
        <taxon>Mollusca</taxon>
        <taxon>Gastropoda</taxon>
        <taxon>Caenogastropoda</taxon>
        <taxon>Neogastropoda</taxon>
        <taxon>Conoidea</taxon>
        <taxon>Conidae</taxon>
        <taxon>Conus</taxon>
        <taxon>Embrikena</taxon>
    </lineage>
</organism>
<name>O16A_CONMB</name>
<accession>A0A384E129</accession>
<sequence length="76" mass="8587">MKLTCVVIVAVLFLTACQLITADDSRSTQRHRALRSTTKLSMSTRCKPPGSKCSPSMRDCCTTCISYTKRCRKYYN</sequence>
<keyword id="KW-0002">3D-structure</keyword>
<keyword id="KW-0108">Calcium channel impairing toxin</keyword>
<keyword id="KW-0903">Direct protein sequencing</keyword>
<keyword id="KW-1015">Disulfide bond</keyword>
<keyword id="KW-0379">Hydroxylation</keyword>
<keyword id="KW-0872">Ion channel impairing toxin</keyword>
<keyword id="KW-0960">Knottin</keyword>
<keyword id="KW-0528">Neurotoxin</keyword>
<keyword id="KW-0964">Secreted</keyword>
<keyword id="KW-0732">Signal</keyword>
<keyword id="KW-0800">Toxin</keyword>
<keyword id="KW-1218">Voltage-gated calcium channel impairing toxin</keyword>